<name>RUVC_XYLFA</name>
<dbReference type="EC" id="3.1.21.10" evidence="1"/>
<dbReference type="EMBL" id="AE003849">
    <property type="protein sequence ID" value="AAF84711.1"/>
    <property type="status" value="ALT_INIT"/>
    <property type="molecule type" value="Genomic_DNA"/>
</dbReference>
<dbReference type="PIR" id="H82623">
    <property type="entry name" value="H82623"/>
</dbReference>
<dbReference type="RefSeq" id="WP_010894371.1">
    <property type="nucleotide sequence ID" value="NC_002488.3"/>
</dbReference>
<dbReference type="SMR" id="Q9PC76"/>
<dbReference type="STRING" id="160492.XF_1905"/>
<dbReference type="KEGG" id="xfa:XF_1905"/>
<dbReference type="eggNOG" id="COG0817">
    <property type="taxonomic scope" value="Bacteria"/>
</dbReference>
<dbReference type="HOGENOM" id="CLU_091257_2_1_6"/>
<dbReference type="Proteomes" id="UP000000812">
    <property type="component" value="Chromosome"/>
</dbReference>
<dbReference type="GO" id="GO:0005737">
    <property type="term" value="C:cytoplasm"/>
    <property type="evidence" value="ECO:0007669"/>
    <property type="project" value="UniProtKB-SubCell"/>
</dbReference>
<dbReference type="GO" id="GO:0048476">
    <property type="term" value="C:Holliday junction resolvase complex"/>
    <property type="evidence" value="ECO:0007669"/>
    <property type="project" value="UniProtKB-UniRule"/>
</dbReference>
<dbReference type="GO" id="GO:0008821">
    <property type="term" value="F:crossover junction DNA endonuclease activity"/>
    <property type="evidence" value="ECO:0007669"/>
    <property type="project" value="UniProtKB-UniRule"/>
</dbReference>
<dbReference type="GO" id="GO:0003677">
    <property type="term" value="F:DNA binding"/>
    <property type="evidence" value="ECO:0007669"/>
    <property type="project" value="UniProtKB-KW"/>
</dbReference>
<dbReference type="GO" id="GO:0000287">
    <property type="term" value="F:magnesium ion binding"/>
    <property type="evidence" value="ECO:0007669"/>
    <property type="project" value="UniProtKB-UniRule"/>
</dbReference>
<dbReference type="GO" id="GO:0006310">
    <property type="term" value="P:DNA recombination"/>
    <property type="evidence" value="ECO:0007669"/>
    <property type="project" value="UniProtKB-UniRule"/>
</dbReference>
<dbReference type="GO" id="GO:0006281">
    <property type="term" value="P:DNA repair"/>
    <property type="evidence" value="ECO:0007669"/>
    <property type="project" value="UniProtKB-UniRule"/>
</dbReference>
<dbReference type="CDD" id="cd16962">
    <property type="entry name" value="RuvC"/>
    <property type="match status" value="1"/>
</dbReference>
<dbReference type="FunFam" id="3.30.420.10:FF:000002">
    <property type="entry name" value="Crossover junction endodeoxyribonuclease RuvC"/>
    <property type="match status" value="1"/>
</dbReference>
<dbReference type="Gene3D" id="3.30.420.10">
    <property type="entry name" value="Ribonuclease H-like superfamily/Ribonuclease H"/>
    <property type="match status" value="1"/>
</dbReference>
<dbReference type="HAMAP" id="MF_00034">
    <property type="entry name" value="RuvC"/>
    <property type="match status" value="1"/>
</dbReference>
<dbReference type="InterPro" id="IPR012337">
    <property type="entry name" value="RNaseH-like_sf"/>
</dbReference>
<dbReference type="InterPro" id="IPR036397">
    <property type="entry name" value="RNaseH_sf"/>
</dbReference>
<dbReference type="InterPro" id="IPR020563">
    <property type="entry name" value="X-over_junc_endoDNase_Mg_BS"/>
</dbReference>
<dbReference type="InterPro" id="IPR002176">
    <property type="entry name" value="X-over_junc_endoDNase_RuvC"/>
</dbReference>
<dbReference type="NCBIfam" id="TIGR00228">
    <property type="entry name" value="ruvC"/>
    <property type="match status" value="1"/>
</dbReference>
<dbReference type="PANTHER" id="PTHR30194">
    <property type="entry name" value="CROSSOVER JUNCTION ENDODEOXYRIBONUCLEASE RUVC"/>
    <property type="match status" value="1"/>
</dbReference>
<dbReference type="PANTHER" id="PTHR30194:SF3">
    <property type="entry name" value="CROSSOVER JUNCTION ENDODEOXYRIBONUCLEASE RUVC"/>
    <property type="match status" value="1"/>
</dbReference>
<dbReference type="Pfam" id="PF02075">
    <property type="entry name" value="RuvC"/>
    <property type="match status" value="1"/>
</dbReference>
<dbReference type="PRINTS" id="PR00696">
    <property type="entry name" value="RSOLVASERUVC"/>
</dbReference>
<dbReference type="SUPFAM" id="SSF53098">
    <property type="entry name" value="Ribonuclease H-like"/>
    <property type="match status" value="1"/>
</dbReference>
<dbReference type="PROSITE" id="PS01321">
    <property type="entry name" value="RUVC"/>
    <property type="match status" value="1"/>
</dbReference>
<comment type="function">
    <text evidence="1">The RuvA-RuvB-RuvC complex processes Holliday junction (HJ) DNA during genetic recombination and DNA repair. Endonuclease that resolves HJ intermediates. Cleaves cruciform DNA by making single-stranded nicks across the HJ at symmetrical positions within the homologous arms, yielding a 5'-phosphate and a 3'-hydroxyl group; requires a central core of homology in the junction. The consensus cleavage sequence is 5'-(A/T)TT(C/G)-3'. Cleavage occurs on the 3'-side of the TT dinucleotide at the point of strand exchange. HJ branch migration catalyzed by RuvA-RuvB allows RuvC to scan DNA until it finds its consensus sequence, where it cleaves and resolves the cruciform DNA.</text>
</comment>
<comment type="catalytic activity">
    <reaction evidence="1">
        <text>Endonucleolytic cleavage at a junction such as a reciprocal single-stranded crossover between two homologous DNA duplexes (Holliday junction).</text>
        <dbReference type="EC" id="3.1.21.10"/>
    </reaction>
</comment>
<comment type="cofactor">
    <cofactor evidence="1">
        <name>Mg(2+)</name>
        <dbReference type="ChEBI" id="CHEBI:18420"/>
    </cofactor>
    <text evidence="1">Binds 2 Mg(2+) ion per subunit.</text>
</comment>
<comment type="subunit">
    <text evidence="1">Homodimer which binds Holliday junction (HJ) DNA. The HJ becomes 2-fold symmetrical on binding to RuvC with unstacked arms; it has a different conformation from HJ DNA in complex with RuvA. In the full resolvosome a probable DNA-RuvA(4)-RuvB(12)-RuvC(2) complex forms which resolves the HJ.</text>
</comment>
<comment type="subcellular location">
    <subcellularLocation>
        <location evidence="1">Cytoplasm</location>
    </subcellularLocation>
</comment>
<comment type="similarity">
    <text evidence="1 2">Belongs to the RuvC family.</text>
</comment>
<comment type="sequence caution" evidence="2">
    <conflict type="erroneous initiation">
        <sequence resource="EMBL-CDS" id="AAF84711"/>
    </conflict>
    <text>Extended N-terminus.</text>
</comment>
<sequence length="173" mass="18489">MTRILGIDPGSQRTGVGVIDVDEYGCSRHVYHAPLVLLGQSSFAGRLKQLLLGLSAVIEEYSPKEVAIEKVFMSKNADSALKLGQARGVAISAVVLRDLPVHEYAARQIKLAVVGRGGADKQQIQHMVGVMLNLQGRLQSDAADALAVAITHAHVSATAQRLGVSTKQAWSRK</sequence>
<proteinExistence type="inferred from homology"/>
<accession>Q9PC76</accession>
<organism>
    <name type="scientific">Xylella fastidiosa (strain 9a5c)</name>
    <dbReference type="NCBI Taxonomy" id="160492"/>
    <lineage>
        <taxon>Bacteria</taxon>
        <taxon>Pseudomonadati</taxon>
        <taxon>Pseudomonadota</taxon>
        <taxon>Gammaproteobacteria</taxon>
        <taxon>Lysobacterales</taxon>
        <taxon>Lysobacteraceae</taxon>
        <taxon>Xylella</taxon>
    </lineage>
</organism>
<reference key="1">
    <citation type="journal article" date="2000" name="Nature">
        <title>The genome sequence of the plant pathogen Xylella fastidiosa.</title>
        <authorList>
            <person name="Simpson A.J.G."/>
            <person name="Reinach F.C."/>
            <person name="Arruda P."/>
            <person name="Abreu F.A."/>
            <person name="Acencio M."/>
            <person name="Alvarenga R."/>
            <person name="Alves L.M.C."/>
            <person name="Araya J.E."/>
            <person name="Baia G.S."/>
            <person name="Baptista C.S."/>
            <person name="Barros M.H."/>
            <person name="Bonaccorsi E.D."/>
            <person name="Bordin S."/>
            <person name="Bove J.M."/>
            <person name="Briones M.R.S."/>
            <person name="Bueno M.R.P."/>
            <person name="Camargo A.A."/>
            <person name="Camargo L.E.A."/>
            <person name="Carraro D.M."/>
            <person name="Carrer H."/>
            <person name="Colauto N.B."/>
            <person name="Colombo C."/>
            <person name="Costa F.F."/>
            <person name="Costa M.C.R."/>
            <person name="Costa-Neto C.M."/>
            <person name="Coutinho L.L."/>
            <person name="Cristofani M."/>
            <person name="Dias-Neto E."/>
            <person name="Docena C."/>
            <person name="El-Dorry H."/>
            <person name="Facincani A.P."/>
            <person name="Ferreira A.J.S."/>
            <person name="Ferreira V.C.A."/>
            <person name="Ferro J.A."/>
            <person name="Fraga J.S."/>
            <person name="Franca S.C."/>
            <person name="Franco M.C."/>
            <person name="Frohme M."/>
            <person name="Furlan L.R."/>
            <person name="Garnier M."/>
            <person name="Goldman G.H."/>
            <person name="Goldman M.H.S."/>
            <person name="Gomes S.L."/>
            <person name="Gruber A."/>
            <person name="Ho P.L."/>
            <person name="Hoheisel J.D."/>
            <person name="Junqueira M.L."/>
            <person name="Kemper E.L."/>
            <person name="Kitajima J.P."/>
            <person name="Krieger J.E."/>
            <person name="Kuramae E.E."/>
            <person name="Laigret F."/>
            <person name="Lambais M.R."/>
            <person name="Leite L.C.C."/>
            <person name="Lemos E.G.M."/>
            <person name="Lemos M.V.F."/>
            <person name="Lopes S.A."/>
            <person name="Lopes C.R."/>
            <person name="Machado J.A."/>
            <person name="Machado M.A."/>
            <person name="Madeira A.M.B.N."/>
            <person name="Madeira H.M.F."/>
            <person name="Marino C.L."/>
            <person name="Marques M.V."/>
            <person name="Martins E.A.L."/>
            <person name="Martins E.M.F."/>
            <person name="Matsukuma A.Y."/>
            <person name="Menck C.F.M."/>
            <person name="Miracca E.C."/>
            <person name="Miyaki C.Y."/>
            <person name="Monteiro-Vitorello C.B."/>
            <person name="Moon D.H."/>
            <person name="Nagai M.A."/>
            <person name="Nascimento A.L.T.O."/>
            <person name="Netto L.E.S."/>
            <person name="Nhani A. Jr."/>
            <person name="Nobrega F.G."/>
            <person name="Nunes L.R."/>
            <person name="Oliveira M.A."/>
            <person name="de Oliveira M.C."/>
            <person name="de Oliveira R.C."/>
            <person name="Palmieri D.A."/>
            <person name="Paris A."/>
            <person name="Peixoto B.R."/>
            <person name="Pereira G.A.G."/>
            <person name="Pereira H.A. Jr."/>
            <person name="Pesquero J.B."/>
            <person name="Quaggio R.B."/>
            <person name="Roberto P.G."/>
            <person name="Rodrigues V."/>
            <person name="de Rosa A.J.M."/>
            <person name="de Rosa V.E. Jr."/>
            <person name="de Sa R.G."/>
            <person name="Santelli R.V."/>
            <person name="Sawasaki H.E."/>
            <person name="da Silva A.C.R."/>
            <person name="da Silva A.M."/>
            <person name="da Silva F.R."/>
            <person name="Silva W.A. Jr."/>
            <person name="da Silveira J.F."/>
            <person name="Silvestri M.L.Z."/>
            <person name="Siqueira W.J."/>
            <person name="de Souza A.A."/>
            <person name="de Souza A.P."/>
            <person name="Terenzi M.F."/>
            <person name="Truffi D."/>
            <person name="Tsai S.M."/>
            <person name="Tsuhako M.H."/>
            <person name="Vallada H."/>
            <person name="Van Sluys M.A."/>
            <person name="Verjovski-Almeida S."/>
            <person name="Vettore A.L."/>
            <person name="Zago M.A."/>
            <person name="Zatz M."/>
            <person name="Meidanis J."/>
            <person name="Setubal J.C."/>
        </authorList>
    </citation>
    <scope>NUCLEOTIDE SEQUENCE [LARGE SCALE GENOMIC DNA]</scope>
    <source>
        <strain>9a5c</strain>
    </source>
</reference>
<feature type="chain" id="PRO_0000183152" description="Crossover junction endodeoxyribonuclease RuvC">
    <location>
        <begin position="1"/>
        <end position="173"/>
    </location>
</feature>
<feature type="active site" evidence="1">
    <location>
        <position position="8"/>
    </location>
</feature>
<feature type="active site" evidence="1">
    <location>
        <position position="69"/>
    </location>
</feature>
<feature type="active site" evidence="1">
    <location>
        <position position="141"/>
    </location>
</feature>
<feature type="binding site" evidence="1">
    <location>
        <position position="8"/>
    </location>
    <ligand>
        <name>Mg(2+)</name>
        <dbReference type="ChEBI" id="CHEBI:18420"/>
        <label>1</label>
    </ligand>
</feature>
<feature type="binding site" evidence="1">
    <location>
        <position position="69"/>
    </location>
    <ligand>
        <name>Mg(2+)</name>
        <dbReference type="ChEBI" id="CHEBI:18420"/>
        <label>2</label>
    </ligand>
</feature>
<feature type="binding site" evidence="1">
    <location>
        <position position="141"/>
    </location>
    <ligand>
        <name>Mg(2+)</name>
        <dbReference type="ChEBI" id="CHEBI:18420"/>
        <label>1</label>
    </ligand>
</feature>
<gene>
    <name evidence="1" type="primary">ruvC</name>
    <name type="ordered locus">XF_1905</name>
</gene>
<protein>
    <recommendedName>
        <fullName evidence="1">Crossover junction endodeoxyribonuclease RuvC</fullName>
        <ecNumber evidence="1">3.1.21.10</ecNumber>
    </recommendedName>
    <alternativeName>
        <fullName evidence="1">Holliday junction nuclease RuvC</fullName>
    </alternativeName>
    <alternativeName>
        <fullName evidence="1">Holliday junction resolvase RuvC</fullName>
    </alternativeName>
</protein>
<evidence type="ECO:0000255" key="1">
    <source>
        <dbReference type="HAMAP-Rule" id="MF_00034"/>
    </source>
</evidence>
<evidence type="ECO:0000305" key="2"/>
<keyword id="KW-0963">Cytoplasm</keyword>
<keyword id="KW-0227">DNA damage</keyword>
<keyword id="KW-0233">DNA recombination</keyword>
<keyword id="KW-0234">DNA repair</keyword>
<keyword id="KW-0238">DNA-binding</keyword>
<keyword id="KW-0255">Endonuclease</keyword>
<keyword id="KW-0378">Hydrolase</keyword>
<keyword id="KW-0460">Magnesium</keyword>
<keyword id="KW-0479">Metal-binding</keyword>
<keyword id="KW-0540">Nuclease</keyword>